<keyword id="KW-0067">ATP-binding</keyword>
<keyword id="KW-0133">Cell shape</keyword>
<keyword id="KW-0961">Cell wall biogenesis/degradation</keyword>
<keyword id="KW-0963">Cytoplasm</keyword>
<keyword id="KW-0436">Ligase</keyword>
<keyword id="KW-0460">Magnesium</keyword>
<keyword id="KW-0464">Manganese</keyword>
<keyword id="KW-0479">Metal-binding</keyword>
<keyword id="KW-0547">Nucleotide-binding</keyword>
<keyword id="KW-0573">Peptidoglycan synthesis</keyword>
<comment type="function">
    <text evidence="2">Cell wall formation.</text>
</comment>
<comment type="catalytic activity">
    <reaction evidence="2">
        <text>2 D-alanine + ATP = D-alanyl-D-alanine + ADP + phosphate + H(+)</text>
        <dbReference type="Rhea" id="RHEA:11224"/>
        <dbReference type="ChEBI" id="CHEBI:15378"/>
        <dbReference type="ChEBI" id="CHEBI:30616"/>
        <dbReference type="ChEBI" id="CHEBI:43474"/>
        <dbReference type="ChEBI" id="CHEBI:57416"/>
        <dbReference type="ChEBI" id="CHEBI:57822"/>
        <dbReference type="ChEBI" id="CHEBI:456216"/>
        <dbReference type="EC" id="6.3.2.4"/>
    </reaction>
</comment>
<comment type="cofactor">
    <cofactor evidence="1">
        <name>Mg(2+)</name>
        <dbReference type="ChEBI" id="CHEBI:18420"/>
    </cofactor>
    <cofactor evidence="1">
        <name>Mn(2+)</name>
        <dbReference type="ChEBI" id="CHEBI:29035"/>
    </cofactor>
    <text evidence="1">Binds 2 magnesium or manganese ions per subunit.</text>
</comment>
<comment type="pathway">
    <text evidence="2">Cell wall biogenesis; peptidoglycan biosynthesis.</text>
</comment>
<comment type="subcellular location">
    <subcellularLocation>
        <location evidence="2">Cytoplasm</location>
    </subcellularLocation>
</comment>
<comment type="similarity">
    <text evidence="2">Belongs to the D-alanine--D-alanine ligase family.</text>
</comment>
<reference key="1">
    <citation type="journal article" date="2007" name="PLoS ONE">
        <title>Analysis of the neurotoxin complex genes in Clostridium botulinum A1-A4 and B1 strains: BoNT/A3, /Ba4 and /B1 clusters are located within plasmids.</title>
        <authorList>
            <person name="Smith T.J."/>
            <person name="Hill K.K."/>
            <person name="Foley B.T."/>
            <person name="Detter J.C."/>
            <person name="Munk A.C."/>
            <person name="Bruce D.C."/>
            <person name="Doggett N.A."/>
            <person name="Smith L.A."/>
            <person name="Marks J.D."/>
            <person name="Xie G."/>
            <person name="Brettin T.S."/>
        </authorList>
    </citation>
    <scope>NUCLEOTIDE SEQUENCE [LARGE SCALE GENOMIC DNA]</scope>
    <source>
        <strain>Okra / Type B1</strain>
    </source>
</reference>
<sequence length="300" mass="33321">MKIGVIMGGISTEREVSLNSGREVIKYLELLEHEIIPIIIDKKEDVMEKAKGIDFAFLALHGKFGEDGTVQSVLQTLDIPYSGCGPLTSAICMDKDMTKKILKYANINTADWVNVSSAENIDYEAIEKIGYPVFVKPNSGGSSVATNLVKDKEGIKEAVELALKYDKEVMIENYTKGEEITCCMLNGKMLPVLAIRPHAEFFDYTAKYADGGSDEVVIELEENLHKKVEEMALACWKELKCEVYVRVDMIVKDGIPYVLELNTLPGMTKNSLFPKSANAVGISFAELLNSIVKYSLEVER</sequence>
<proteinExistence type="inferred from homology"/>
<protein>
    <recommendedName>
        <fullName evidence="2">D-alanine--D-alanine ligase</fullName>
        <ecNumber evidence="2">6.3.2.4</ecNumber>
    </recommendedName>
    <alternativeName>
        <fullName evidence="2">D-Ala-D-Ala ligase</fullName>
    </alternativeName>
    <alternativeName>
        <fullName evidence="2">D-alanylalanine synthetase</fullName>
    </alternativeName>
</protein>
<feature type="chain" id="PRO_1000091175" description="D-alanine--D-alanine ligase">
    <location>
        <begin position="1"/>
        <end position="300"/>
    </location>
</feature>
<feature type="domain" description="ATP-grasp" evidence="2">
    <location>
        <begin position="99"/>
        <end position="293"/>
    </location>
</feature>
<feature type="binding site" evidence="2">
    <location>
        <begin position="126"/>
        <end position="181"/>
    </location>
    <ligand>
        <name>ATP</name>
        <dbReference type="ChEBI" id="CHEBI:30616"/>
    </ligand>
</feature>
<feature type="binding site" evidence="2">
    <location>
        <position position="248"/>
    </location>
    <ligand>
        <name>Mg(2+)</name>
        <dbReference type="ChEBI" id="CHEBI:18420"/>
        <label>1</label>
    </ligand>
</feature>
<feature type="binding site" evidence="2">
    <location>
        <position position="260"/>
    </location>
    <ligand>
        <name>Mg(2+)</name>
        <dbReference type="ChEBI" id="CHEBI:18420"/>
        <label>1</label>
    </ligand>
</feature>
<feature type="binding site" evidence="2">
    <location>
        <position position="260"/>
    </location>
    <ligand>
        <name>Mg(2+)</name>
        <dbReference type="ChEBI" id="CHEBI:18420"/>
        <label>2</label>
    </ligand>
</feature>
<feature type="binding site" evidence="2">
    <location>
        <position position="262"/>
    </location>
    <ligand>
        <name>Mg(2+)</name>
        <dbReference type="ChEBI" id="CHEBI:18420"/>
        <label>2</label>
    </ligand>
</feature>
<evidence type="ECO:0000250" key="1"/>
<evidence type="ECO:0000255" key="2">
    <source>
        <dbReference type="HAMAP-Rule" id="MF_00047"/>
    </source>
</evidence>
<organism>
    <name type="scientific">Clostridium botulinum (strain Okra / Type B1)</name>
    <dbReference type="NCBI Taxonomy" id="498213"/>
    <lineage>
        <taxon>Bacteria</taxon>
        <taxon>Bacillati</taxon>
        <taxon>Bacillota</taxon>
        <taxon>Clostridia</taxon>
        <taxon>Eubacteriales</taxon>
        <taxon>Clostridiaceae</taxon>
        <taxon>Clostridium</taxon>
    </lineage>
</organism>
<name>DDL_CLOBK</name>
<gene>
    <name evidence="2" type="primary">ddl</name>
    <name type="ordered locus">CLD_0290</name>
</gene>
<accession>B1IEG9</accession>
<dbReference type="EC" id="6.3.2.4" evidence="2"/>
<dbReference type="EMBL" id="CP000939">
    <property type="protein sequence ID" value="ACA46767.1"/>
    <property type="molecule type" value="Genomic_DNA"/>
</dbReference>
<dbReference type="RefSeq" id="WP_003399631.1">
    <property type="nucleotide sequence ID" value="NC_010516.1"/>
</dbReference>
<dbReference type="SMR" id="B1IEG9"/>
<dbReference type="KEGG" id="cbb:CLD_0290"/>
<dbReference type="HOGENOM" id="CLU_039268_1_1_9"/>
<dbReference type="UniPathway" id="UPA00219"/>
<dbReference type="Proteomes" id="UP000008541">
    <property type="component" value="Chromosome"/>
</dbReference>
<dbReference type="GO" id="GO:0005737">
    <property type="term" value="C:cytoplasm"/>
    <property type="evidence" value="ECO:0007669"/>
    <property type="project" value="UniProtKB-SubCell"/>
</dbReference>
<dbReference type="GO" id="GO:0005524">
    <property type="term" value="F:ATP binding"/>
    <property type="evidence" value="ECO:0007669"/>
    <property type="project" value="UniProtKB-KW"/>
</dbReference>
<dbReference type="GO" id="GO:0008716">
    <property type="term" value="F:D-alanine-D-alanine ligase activity"/>
    <property type="evidence" value="ECO:0007669"/>
    <property type="project" value="UniProtKB-UniRule"/>
</dbReference>
<dbReference type="GO" id="GO:0046872">
    <property type="term" value="F:metal ion binding"/>
    <property type="evidence" value="ECO:0007669"/>
    <property type="project" value="UniProtKB-KW"/>
</dbReference>
<dbReference type="GO" id="GO:0071555">
    <property type="term" value="P:cell wall organization"/>
    <property type="evidence" value="ECO:0007669"/>
    <property type="project" value="UniProtKB-KW"/>
</dbReference>
<dbReference type="GO" id="GO:0009252">
    <property type="term" value="P:peptidoglycan biosynthetic process"/>
    <property type="evidence" value="ECO:0007669"/>
    <property type="project" value="UniProtKB-UniRule"/>
</dbReference>
<dbReference type="GO" id="GO:0008360">
    <property type="term" value="P:regulation of cell shape"/>
    <property type="evidence" value="ECO:0007669"/>
    <property type="project" value="UniProtKB-KW"/>
</dbReference>
<dbReference type="FunFam" id="3.30.470.20:FF:000074">
    <property type="entry name" value="D-alanine--D-alanine ligase"/>
    <property type="match status" value="1"/>
</dbReference>
<dbReference type="FunFam" id="3.40.50.20:FF:000031">
    <property type="entry name" value="D-alanine--D-alanine ligase"/>
    <property type="match status" value="1"/>
</dbReference>
<dbReference type="Gene3D" id="3.40.50.20">
    <property type="match status" value="1"/>
</dbReference>
<dbReference type="Gene3D" id="3.30.1490.20">
    <property type="entry name" value="ATP-grasp fold, A domain"/>
    <property type="match status" value="1"/>
</dbReference>
<dbReference type="Gene3D" id="3.30.470.20">
    <property type="entry name" value="ATP-grasp fold, B domain"/>
    <property type="match status" value="1"/>
</dbReference>
<dbReference type="HAMAP" id="MF_00047">
    <property type="entry name" value="Dala_Dala_lig"/>
    <property type="match status" value="1"/>
</dbReference>
<dbReference type="InterPro" id="IPR011761">
    <property type="entry name" value="ATP-grasp"/>
</dbReference>
<dbReference type="InterPro" id="IPR013815">
    <property type="entry name" value="ATP_grasp_subdomain_1"/>
</dbReference>
<dbReference type="InterPro" id="IPR000291">
    <property type="entry name" value="D-Ala_lig_Van_CS"/>
</dbReference>
<dbReference type="InterPro" id="IPR005905">
    <property type="entry name" value="D_ala_D_ala"/>
</dbReference>
<dbReference type="InterPro" id="IPR011095">
    <property type="entry name" value="Dala_Dala_lig_C"/>
</dbReference>
<dbReference type="InterPro" id="IPR011127">
    <property type="entry name" value="Dala_Dala_lig_N"/>
</dbReference>
<dbReference type="InterPro" id="IPR016185">
    <property type="entry name" value="PreATP-grasp_dom_sf"/>
</dbReference>
<dbReference type="NCBIfam" id="TIGR01205">
    <property type="entry name" value="D_ala_D_alaTIGR"/>
    <property type="match status" value="1"/>
</dbReference>
<dbReference type="NCBIfam" id="NF002378">
    <property type="entry name" value="PRK01372.1"/>
    <property type="match status" value="1"/>
</dbReference>
<dbReference type="PANTHER" id="PTHR23132">
    <property type="entry name" value="D-ALANINE--D-ALANINE LIGASE"/>
    <property type="match status" value="1"/>
</dbReference>
<dbReference type="PANTHER" id="PTHR23132:SF23">
    <property type="entry name" value="D-ALANINE--D-ALANINE LIGASE B"/>
    <property type="match status" value="1"/>
</dbReference>
<dbReference type="Pfam" id="PF07478">
    <property type="entry name" value="Dala_Dala_lig_C"/>
    <property type="match status" value="1"/>
</dbReference>
<dbReference type="Pfam" id="PF01820">
    <property type="entry name" value="Dala_Dala_lig_N"/>
    <property type="match status" value="1"/>
</dbReference>
<dbReference type="PIRSF" id="PIRSF039102">
    <property type="entry name" value="Ddl/VanB"/>
    <property type="match status" value="1"/>
</dbReference>
<dbReference type="SMART" id="SM01209">
    <property type="entry name" value="GARS_A"/>
    <property type="match status" value="1"/>
</dbReference>
<dbReference type="SUPFAM" id="SSF56059">
    <property type="entry name" value="Glutathione synthetase ATP-binding domain-like"/>
    <property type="match status" value="1"/>
</dbReference>
<dbReference type="SUPFAM" id="SSF52440">
    <property type="entry name" value="PreATP-grasp domain"/>
    <property type="match status" value="1"/>
</dbReference>
<dbReference type="PROSITE" id="PS50975">
    <property type="entry name" value="ATP_GRASP"/>
    <property type="match status" value="1"/>
</dbReference>
<dbReference type="PROSITE" id="PS00843">
    <property type="entry name" value="DALA_DALA_LIGASE_1"/>
    <property type="match status" value="1"/>
</dbReference>
<dbReference type="PROSITE" id="PS00844">
    <property type="entry name" value="DALA_DALA_LIGASE_2"/>
    <property type="match status" value="1"/>
</dbReference>